<reference key="1">
    <citation type="journal article" date="2004" name="Proc. Natl. Acad. Sci. U.S.A.">
        <title>Activation of Arp2/3 complex-dependent actin polymerization by plant proteins distantly related to Scar/WAVE.</title>
        <authorList>
            <person name="Frank M."/>
            <person name="Egile C."/>
            <person name="Dyachok J."/>
            <person name="Djakovic S."/>
            <person name="Nolasco M."/>
            <person name="Li R."/>
            <person name="Smith L.G."/>
        </authorList>
    </citation>
    <scope>NUCLEOTIDE SEQUENCE [MRNA]</scope>
    <scope>TISSUE SPECIFICITY</scope>
    <scope>INTERACTION WITH BRK1</scope>
</reference>
<reference key="2">
    <citation type="journal article" date="1999" name="Nature">
        <title>Sequence and analysis of chromosome 2 of the plant Arabidopsis thaliana.</title>
        <authorList>
            <person name="Lin X."/>
            <person name="Kaul S."/>
            <person name="Rounsley S.D."/>
            <person name="Shea T.P."/>
            <person name="Benito M.-I."/>
            <person name="Town C.D."/>
            <person name="Fujii C.Y."/>
            <person name="Mason T.M."/>
            <person name="Bowman C.L."/>
            <person name="Barnstead M.E."/>
            <person name="Feldblyum T.V."/>
            <person name="Buell C.R."/>
            <person name="Ketchum K.A."/>
            <person name="Lee J.J."/>
            <person name="Ronning C.M."/>
            <person name="Koo H.L."/>
            <person name="Moffat K.S."/>
            <person name="Cronin L.A."/>
            <person name="Shen M."/>
            <person name="Pai G."/>
            <person name="Van Aken S."/>
            <person name="Umayam L."/>
            <person name="Tallon L.J."/>
            <person name="Gill J.E."/>
            <person name="Adams M.D."/>
            <person name="Carrera A.J."/>
            <person name="Creasy T.H."/>
            <person name="Goodman H.M."/>
            <person name="Somerville C.R."/>
            <person name="Copenhaver G.P."/>
            <person name="Preuss D."/>
            <person name="Nierman W.C."/>
            <person name="White O."/>
            <person name="Eisen J.A."/>
            <person name="Salzberg S.L."/>
            <person name="Fraser C.M."/>
            <person name="Venter J.C."/>
        </authorList>
    </citation>
    <scope>NUCLEOTIDE SEQUENCE [LARGE SCALE GENOMIC DNA]</scope>
    <source>
        <strain>cv. Columbia</strain>
    </source>
</reference>
<reference key="3">
    <citation type="journal article" date="2017" name="Plant J.">
        <title>Araport11: a complete reannotation of the Arabidopsis thaliana reference genome.</title>
        <authorList>
            <person name="Cheng C.Y."/>
            <person name="Krishnakumar V."/>
            <person name="Chan A.P."/>
            <person name="Thibaud-Nissen F."/>
            <person name="Schobel S."/>
            <person name="Town C.D."/>
        </authorList>
    </citation>
    <scope>GENOME REANNOTATION</scope>
    <source>
        <strain>cv. Columbia</strain>
    </source>
</reference>
<reference key="4">
    <citation type="journal article" date="2003" name="Science">
        <title>Empirical analysis of transcriptional activity in the Arabidopsis genome.</title>
        <authorList>
            <person name="Yamada K."/>
            <person name="Lim J."/>
            <person name="Dale J.M."/>
            <person name="Chen H."/>
            <person name="Shinn P."/>
            <person name="Palm C.J."/>
            <person name="Southwick A.M."/>
            <person name="Wu H.C."/>
            <person name="Kim C.J."/>
            <person name="Nguyen M."/>
            <person name="Pham P.K."/>
            <person name="Cheuk R.F."/>
            <person name="Karlin-Newmann G."/>
            <person name="Liu S.X."/>
            <person name="Lam B."/>
            <person name="Sakano H."/>
            <person name="Wu T."/>
            <person name="Yu G."/>
            <person name="Miranda M."/>
            <person name="Quach H.L."/>
            <person name="Tripp M."/>
            <person name="Chang C.H."/>
            <person name="Lee J.M."/>
            <person name="Toriumi M.J."/>
            <person name="Chan M.M."/>
            <person name="Tang C.C."/>
            <person name="Onodera C.S."/>
            <person name="Deng J.M."/>
            <person name="Akiyama K."/>
            <person name="Ansari Y."/>
            <person name="Arakawa T."/>
            <person name="Banh J."/>
            <person name="Banno F."/>
            <person name="Bowser L."/>
            <person name="Brooks S.Y."/>
            <person name="Carninci P."/>
            <person name="Chao Q."/>
            <person name="Choy N."/>
            <person name="Enju A."/>
            <person name="Goldsmith A.D."/>
            <person name="Gurjal M."/>
            <person name="Hansen N.F."/>
            <person name="Hayashizaki Y."/>
            <person name="Johnson-Hopson C."/>
            <person name="Hsuan V.W."/>
            <person name="Iida K."/>
            <person name="Karnes M."/>
            <person name="Khan S."/>
            <person name="Koesema E."/>
            <person name="Ishida J."/>
            <person name="Jiang P.X."/>
            <person name="Jones T."/>
            <person name="Kawai J."/>
            <person name="Kamiya A."/>
            <person name="Meyers C."/>
            <person name="Nakajima M."/>
            <person name="Narusaka M."/>
            <person name="Seki M."/>
            <person name="Sakurai T."/>
            <person name="Satou M."/>
            <person name="Tamse R."/>
            <person name="Vaysberg M."/>
            <person name="Wallender E.K."/>
            <person name="Wong C."/>
            <person name="Yamamura Y."/>
            <person name="Yuan S."/>
            <person name="Shinozaki K."/>
            <person name="Davis R.W."/>
            <person name="Theologis A."/>
            <person name="Ecker J.R."/>
        </authorList>
    </citation>
    <scope>NUCLEOTIDE SEQUENCE [LARGE SCALE MRNA]</scope>
    <source>
        <strain>cv. Columbia</strain>
    </source>
</reference>
<reference key="5">
    <citation type="submission" date="2005-03" db="EMBL/GenBank/DDBJ databases">
        <title>Large-scale analysis of RIKEN Arabidopsis full-length (RAFL) cDNAs.</title>
        <authorList>
            <person name="Totoki Y."/>
            <person name="Seki M."/>
            <person name="Ishida J."/>
            <person name="Nakajima M."/>
            <person name="Enju A."/>
            <person name="Kamiya A."/>
            <person name="Narusaka M."/>
            <person name="Shin-i T."/>
            <person name="Nakagawa M."/>
            <person name="Sakamoto N."/>
            <person name="Oishi K."/>
            <person name="Kohara Y."/>
            <person name="Kobayashi M."/>
            <person name="Toyoda A."/>
            <person name="Sakaki Y."/>
            <person name="Sakurai T."/>
            <person name="Iida K."/>
            <person name="Akiyama K."/>
            <person name="Satou M."/>
            <person name="Toyoda T."/>
            <person name="Konagaya A."/>
            <person name="Carninci P."/>
            <person name="Kawai J."/>
            <person name="Hayashizaki Y."/>
            <person name="Shinozaki K."/>
        </authorList>
    </citation>
    <scope>NUCLEOTIDE SEQUENCE [LARGE SCALE MRNA] OF 523-821</scope>
    <source>
        <strain>cv. Columbia</strain>
    </source>
</reference>
<reference key="6">
    <citation type="journal article" date="2004" name="Curr. Biol.">
        <title>Arabidopsis NAP1 is essential for Arp2/3-dependent trichome morphogenesis.</title>
        <authorList>
            <person name="Deeks M.J."/>
            <person name="Kaloriti D."/>
            <person name="Davies B."/>
            <person name="Malho R."/>
            <person name="Hussey P.J."/>
        </authorList>
    </citation>
    <scope>IDENTIFICATION</scope>
    <scope>INTERACTION WITH ACTIN</scope>
</reference>
<reference key="7">
    <citation type="journal article" date="2004" name="Plant Cell">
        <title>NAPP and PIRP encode subunits of a putative wave regulatory protein complex involved in plant cell morphogenesis.</title>
        <authorList>
            <person name="Brembu T."/>
            <person name="Winge P."/>
            <person name="Seem M."/>
            <person name="Bones A.M."/>
        </authorList>
    </citation>
    <scope>FUNCTION</scope>
    <scope>IDENTIFICATION</scope>
</reference>
<reference key="8">
    <citation type="journal article" date="2007" name="Development">
        <title>The role of Arabidopsis SCAR genes in ARP2-ARP3-dependent cell morphogenesis.</title>
        <authorList>
            <person name="Uhrig J.F."/>
            <person name="Mutondo M."/>
            <person name="Zimmermann I."/>
            <person name="Deeks M.J."/>
            <person name="Machesky L.M."/>
            <person name="Thomas P."/>
            <person name="Uhrig S."/>
            <person name="Rambke C."/>
            <person name="Hussey P.J."/>
            <person name="Huelskamp M."/>
        </authorList>
    </citation>
    <scope>INTERACTION WITH SPK1; ABI1 AND ABI2</scope>
</reference>
<comment type="function">
    <text evidence="3">Involved in regulation of actin and microtubule organization. Part of a WAVE complex that activates the Arp2/3 complex. Regulates trichome branch positioning and expansion.</text>
</comment>
<comment type="subunit">
    <text evidence="2 4 5">Binds BRK1 and actin. Interacts with SPK1, ABI1 and ABI2.</text>
</comment>
<comment type="interaction">
    <interactant intactId="EBI-1547775">
        <id>Q6AWX6</id>
    </interactant>
    <interactant intactId="EBI-1547691">
        <id>Q94JY4</id>
        <label>BRK1</label>
    </interactant>
    <organismsDiffer>false</organismsDiffer>
    <experiments>2</experiments>
</comment>
<comment type="subcellular location">
    <subcellularLocation>
        <location>Cytoplasm</location>
        <location>Cytoskeleton</location>
    </subcellularLocation>
</comment>
<comment type="alternative products">
    <event type="alternative splicing"/>
    <isoform>
        <id>Q6AWX6-1</id>
        <name>1</name>
        <sequence type="displayed"/>
    </isoform>
    <text>A number of isoforms are produced. According to EST sequences.</text>
</comment>
<comment type="tissue specificity">
    <text evidence="4">Expressed in expanding cotyledons, expanding leaves and expanding siliques containing developing embryos. Detected in unopened flower buds and in the expanding tip region of roots. Reduced expression in mature leaves and mature cotyledons.</text>
</comment>
<comment type="domain">
    <text>Activates the Arp2/3 complex and binds actin through the C-terminal VCA (verprolin homology/cofilin homology/acidic) domain consisting of a WH2 domain followed by an Arp2/3-binding acidic motif (A), separated by a conserved linker region (C). Binds BRK1 through the N-terminal Scar homology domain (SHD).</text>
</comment>
<comment type="similarity">
    <text evidence="6">Belongs to the SCAR/WAVE family.</text>
</comment>
<comment type="sequence caution" evidence="6">
    <conflict type="erroneous gene model prediction">
        <sequence resource="EMBL-CDS" id="AAB67636"/>
    </conflict>
</comment>
<comment type="sequence caution" evidence="6">
    <conflict type="frameshift">
        <sequence resource="EMBL-CDS" id="AAO22743"/>
    </conflict>
</comment>
<protein>
    <recommendedName>
        <fullName>Protein SCAR1</fullName>
        <shortName>AtSCAR1</shortName>
    </recommendedName>
    <alternativeName>
        <fullName>Protein WAVE1</fullName>
    </alternativeName>
</protein>
<sequence>MPLVRLQVRNVYGLGQKELHTKVDREDPKAILDDVAVSGLVGILRQLGDLTEFAAEIFHGIQEEVMITASRSNKLKMRLKQIEAKVPTIQKTVLAQTNHIHFAYTGGLEWHPRIPNVQNHFMYDELPPFIMTPYEDCREPPRLHLLDKFDINGPGSCLKRYSDPTHFKRASRASKPSEIKKKKSIQRGRDISRLASVANQSDRKTCTSLSFSGRTSTSKTASTIEIESKSDLQEHRSFSFDSRSGGEKPKRVSSSSRFTPGSRTIASVLSESESESDSPSQDLTARGSSSVSWHEKAEIVECNVLQCATDEAPEVMETNFVLDAEPVSRLKEHSAVEAVQDIKPKELEMDNEDETESEGDDFVDALYTIDSESENDEAFQATKEVQKNLYNDITEQETEKISNNFSVDETKCAATSELHLSSSPVYKSDELIHQDPWAASEISSGTHSYSNGFSNPLYDISGIQEHQESEEVESSCDTESIKTWTNGNLLGLKPSKPKIIAETIPEIVEDIDSETFQEHLREDYKAPFDWFTSSPPLDHMKISFKSSETLPSSELQLKLPDEYTFSSFQLVPETIATSLPDSDSDKDTFCRSSSYISDNSDNDNRSVSMSEQQWEEESEGIRESKRQQELYDSFHRVNAEASSLPVPFPKIETTNGCLVENVSYLQNPAEPLPPPLPPLQWMVSKIPSAGFEDNNKQSLKDALTQAFEKNNNSLTAVKKKEPHIVTVSDPKLVTKVHLKNNVRDYKQSHGNTNETEAGDFLHQIRTKQFNLRRVVRTKTSSSETTMNTNISVILEKANSIRQAVASDDGEGESDTWSDSDT</sequence>
<keyword id="KW-0009">Actin-binding</keyword>
<keyword id="KW-0025">Alternative splicing</keyword>
<keyword id="KW-0963">Cytoplasm</keyword>
<keyword id="KW-0206">Cytoskeleton</keyword>
<keyword id="KW-1185">Reference proteome</keyword>
<proteinExistence type="evidence at protein level"/>
<dbReference type="EMBL" id="AY743926">
    <property type="protein sequence ID" value="AAU93851.1"/>
    <property type="molecule type" value="mRNA"/>
</dbReference>
<dbReference type="EMBL" id="AC002341">
    <property type="protein sequence ID" value="AAB67636.1"/>
    <property type="status" value="ALT_SEQ"/>
    <property type="molecule type" value="Genomic_DNA"/>
</dbReference>
<dbReference type="EMBL" id="CP002685">
    <property type="protein sequence ID" value="AEC08925.1"/>
    <property type="molecule type" value="Genomic_DNA"/>
</dbReference>
<dbReference type="EMBL" id="BT002929">
    <property type="protein sequence ID" value="AAO22743.1"/>
    <property type="status" value="ALT_FRAME"/>
    <property type="molecule type" value="mRNA"/>
</dbReference>
<dbReference type="EMBL" id="AK221958">
    <property type="protein sequence ID" value="BAD94455.1"/>
    <property type="molecule type" value="mRNA"/>
</dbReference>
<dbReference type="EMBL" id="BK005566">
    <property type="protein sequence ID" value="DAA05586.1"/>
    <property type="molecule type" value="mRNA"/>
</dbReference>
<dbReference type="PIR" id="A84753">
    <property type="entry name" value="A84753"/>
</dbReference>
<dbReference type="RefSeq" id="NP_001031474.1">
    <molecule id="Q6AWX6-1"/>
    <property type="nucleotide sequence ID" value="NM_001036397.3"/>
</dbReference>
<dbReference type="BioGRID" id="3323">
    <property type="interactions" value="9"/>
</dbReference>
<dbReference type="ELM" id="Q6AWX6"/>
<dbReference type="FunCoup" id="Q6AWX6">
    <property type="interactions" value="496"/>
</dbReference>
<dbReference type="IntAct" id="Q6AWX6">
    <property type="interactions" value="8"/>
</dbReference>
<dbReference type="STRING" id="3702.Q6AWX6"/>
<dbReference type="iPTMnet" id="Q6AWX6"/>
<dbReference type="PaxDb" id="3702-AT2G34150.2"/>
<dbReference type="ProteomicsDB" id="226594">
    <molecule id="Q6AWX6-1"/>
</dbReference>
<dbReference type="EnsemblPlants" id="AT2G34150.2">
    <molecule id="Q6AWX6-1"/>
    <property type="protein sequence ID" value="AT2G34150.2"/>
    <property type="gene ID" value="AT2G34150"/>
</dbReference>
<dbReference type="GeneID" id="817976"/>
<dbReference type="Gramene" id="AT2G34150.2">
    <molecule id="Q6AWX6-1"/>
    <property type="protein sequence ID" value="AT2G34150.2"/>
    <property type="gene ID" value="AT2G34150"/>
</dbReference>
<dbReference type="KEGG" id="ath:AT2G34150"/>
<dbReference type="Araport" id="AT2G34150"/>
<dbReference type="TAIR" id="AT2G34150">
    <property type="gene designation" value="WAVE1"/>
</dbReference>
<dbReference type="eggNOG" id="ENOG502QSPV">
    <property type="taxonomic scope" value="Eukaryota"/>
</dbReference>
<dbReference type="HOGENOM" id="CLU_005038_0_0_1"/>
<dbReference type="InParanoid" id="Q6AWX6"/>
<dbReference type="OMA" id="PYDDCRD"/>
<dbReference type="OrthoDB" id="1929108at2759"/>
<dbReference type="PhylomeDB" id="Q6AWX6"/>
<dbReference type="PRO" id="PR:Q6AWX6"/>
<dbReference type="Proteomes" id="UP000006548">
    <property type="component" value="Chromosome 2"/>
</dbReference>
<dbReference type="ExpressionAtlas" id="Q6AWX6">
    <property type="expression patterns" value="baseline and differential"/>
</dbReference>
<dbReference type="GO" id="GO:0071944">
    <property type="term" value="C:cell periphery"/>
    <property type="evidence" value="ECO:0000314"/>
    <property type="project" value="TAIR"/>
</dbReference>
<dbReference type="GO" id="GO:0005856">
    <property type="term" value="C:cytoskeleton"/>
    <property type="evidence" value="ECO:0007669"/>
    <property type="project" value="UniProtKB-SubCell"/>
</dbReference>
<dbReference type="GO" id="GO:0043229">
    <property type="term" value="C:intracellular organelle"/>
    <property type="evidence" value="ECO:0000314"/>
    <property type="project" value="TAIR"/>
</dbReference>
<dbReference type="GO" id="GO:0016020">
    <property type="term" value="C:membrane"/>
    <property type="evidence" value="ECO:0000314"/>
    <property type="project" value="TAIR"/>
</dbReference>
<dbReference type="GO" id="GO:0031209">
    <property type="term" value="C:SCAR complex"/>
    <property type="evidence" value="ECO:0000304"/>
    <property type="project" value="TAIR"/>
</dbReference>
<dbReference type="GO" id="GO:0003785">
    <property type="term" value="F:actin monomer binding"/>
    <property type="evidence" value="ECO:0000314"/>
    <property type="project" value="TAIR"/>
</dbReference>
<dbReference type="GO" id="GO:0030036">
    <property type="term" value="P:actin cytoskeleton organization"/>
    <property type="evidence" value="ECO:0007669"/>
    <property type="project" value="InterPro"/>
</dbReference>
<dbReference type="GO" id="GO:0051127">
    <property type="term" value="P:positive regulation of actin nucleation"/>
    <property type="evidence" value="ECO:0000315"/>
    <property type="project" value="TAIR"/>
</dbReference>
<dbReference type="Gene3D" id="1.20.5.340">
    <property type="match status" value="1"/>
</dbReference>
<dbReference type="Gene3D" id="6.10.280.150">
    <property type="match status" value="1"/>
</dbReference>
<dbReference type="InterPro" id="IPR028288">
    <property type="entry name" value="SCAR/WAVE_fam"/>
</dbReference>
<dbReference type="PANTHER" id="PTHR12902:SF36">
    <property type="entry name" value="PROTEIN SCAR1"/>
    <property type="match status" value="1"/>
</dbReference>
<dbReference type="PANTHER" id="PTHR12902">
    <property type="entry name" value="WASP-1"/>
    <property type="match status" value="1"/>
</dbReference>
<organism>
    <name type="scientific">Arabidopsis thaliana</name>
    <name type="common">Mouse-ear cress</name>
    <dbReference type="NCBI Taxonomy" id="3702"/>
    <lineage>
        <taxon>Eukaryota</taxon>
        <taxon>Viridiplantae</taxon>
        <taxon>Streptophyta</taxon>
        <taxon>Embryophyta</taxon>
        <taxon>Tracheophyta</taxon>
        <taxon>Spermatophyta</taxon>
        <taxon>Magnoliopsida</taxon>
        <taxon>eudicotyledons</taxon>
        <taxon>Gunneridae</taxon>
        <taxon>Pentapetalae</taxon>
        <taxon>rosids</taxon>
        <taxon>malvids</taxon>
        <taxon>Brassicales</taxon>
        <taxon>Brassicaceae</taxon>
        <taxon>Camelineae</taxon>
        <taxon>Arabidopsis</taxon>
    </lineage>
</organism>
<accession>Q6AWX6</accession>
<accession>O22968</accession>
<accession>Q56WS5</accession>
<accession>Q5XPJ7</accession>
<accession>Q84WP7</accession>
<gene>
    <name type="primary">SCAR1</name>
    <name type="ordered locus">At2g34150</name>
    <name type="ORF">T14G11.27</name>
</gene>
<name>SCAR1_ARATH</name>
<evidence type="ECO:0000256" key="1">
    <source>
        <dbReference type="SAM" id="MobiDB-lite"/>
    </source>
</evidence>
<evidence type="ECO:0000269" key="2">
    <source>
    </source>
</evidence>
<evidence type="ECO:0000269" key="3">
    <source>
    </source>
</evidence>
<evidence type="ECO:0000269" key="4">
    <source>
    </source>
</evidence>
<evidence type="ECO:0000269" key="5">
    <source>
    </source>
</evidence>
<evidence type="ECO:0000305" key="6"/>
<feature type="chain" id="PRO_0000189004" description="Protein SCAR1">
    <location>
        <begin position="1"/>
        <end position="821"/>
    </location>
</feature>
<feature type="domain" description="WH2">
    <location>
        <begin position="756"/>
        <end position="774"/>
    </location>
</feature>
<feature type="region of interest" description="Disordered" evidence="1">
    <location>
        <begin position="168"/>
        <end position="189"/>
    </location>
</feature>
<feature type="region of interest" description="Disordered" evidence="1">
    <location>
        <begin position="205"/>
        <end position="289"/>
    </location>
</feature>
<feature type="region of interest" description="Disordered" evidence="1">
    <location>
        <begin position="577"/>
        <end position="625"/>
    </location>
</feature>
<feature type="region of interest" description="Disordered" evidence="1">
    <location>
        <begin position="802"/>
        <end position="821"/>
    </location>
</feature>
<feature type="compositionally biased region" description="Polar residues" evidence="1">
    <location>
        <begin position="206"/>
        <end position="225"/>
    </location>
</feature>
<feature type="compositionally biased region" description="Basic and acidic residues" evidence="1">
    <location>
        <begin position="226"/>
        <end position="250"/>
    </location>
</feature>
<feature type="compositionally biased region" description="Polar residues" evidence="1">
    <location>
        <begin position="252"/>
        <end position="265"/>
    </location>
</feature>
<feature type="compositionally biased region" description="Low complexity" evidence="1">
    <location>
        <begin position="592"/>
        <end position="612"/>
    </location>
</feature>
<feature type="compositionally biased region" description="Acidic residues" evidence="1">
    <location>
        <begin position="807"/>
        <end position="821"/>
    </location>
</feature>
<feature type="sequence conflict" description="In Ref. 4; AAO22743." evidence="6" ref="4">
    <original>G</original>
    <variation>V</variation>
    <location>
        <position position="261"/>
    </location>
</feature>
<feature type="sequence conflict" description="In Ref. 1; AAU93851." evidence="6" ref="1">
    <original>V</original>
    <variation>A</variation>
    <location>
        <position position="646"/>
    </location>
</feature>